<feature type="chain" id="PRO_0000193148" description="L-2-aminoadipate reductase large subunit">
    <location>
        <begin position="1"/>
        <end position="1385"/>
    </location>
</feature>
<feature type="domain" description="Carrier" evidence="3">
    <location>
        <begin position="843"/>
        <end position="920"/>
    </location>
</feature>
<feature type="modified residue" description="O-(pantetheine 4'-phosphoryl)serine" evidence="3">
    <location>
        <position position="880"/>
    </location>
</feature>
<organism>
    <name type="scientific">Eremothecium gossypii (strain ATCC 10895 / CBS 109.51 / FGSC 9923 / NRRL Y-1056)</name>
    <name type="common">Yeast</name>
    <name type="synonym">Ashbya gossypii</name>
    <dbReference type="NCBI Taxonomy" id="284811"/>
    <lineage>
        <taxon>Eukaryota</taxon>
        <taxon>Fungi</taxon>
        <taxon>Dikarya</taxon>
        <taxon>Ascomycota</taxon>
        <taxon>Saccharomycotina</taxon>
        <taxon>Saccharomycetes</taxon>
        <taxon>Saccharomycetales</taxon>
        <taxon>Saccharomycetaceae</taxon>
        <taxon>Eremothecium</taxon>
    </lineage>
</organism>
<protein>
    <recommendedName>
        <fullName>L-2-aminoadipate reductase large subunit</fullName>
        <ecNumber evidence="2">1.2.1.31</ecNumber>
        <ecNumber evidence="2">1.2.1.95</ecNumber>
    </recommendedName>
    <alternativeName>
        <fullName>Alpha-aminoadipate reductase</fullName>
        <shortName>Alpha-AR</shortName>
    </alternativeName>
    <alternativeName>
        <fullName>L-aminoadipate-semialdehyde dehydrogenase</fullName>
    </alternativeName>
</protein>
<proteinExistence type="inferred from homology"/>
<dbReference type="EC" id="1.2.1.31" evidence="2"/>
<dbReference type="EC" id="1.2.1.95" evidence="2"/>
<dbReference type="EMBL" id="AE016817">
    <property type="protein sequence ID" value="AAS51573.2"/>
    <property type="molecule type" value="Genomic_DNA"/>
</dbReference>
<dbReference type="RefSeq" id="NP_983749.2">
    <property type="nucleotide sequence ID" value="NM_209102.2"/>
</dbReference>
<dbReference type="SMR" id="Q75BB3"/>
<dbReference type="FunCoup" id="Q75BB3">
    <property type="interactions" value="756"/>
</dbReference>
<dbReference type="STRING" id="284811.Q75BB3"/>
<dbReference type="EnsemblFungi" id="AAS51573">
    <property type="protein sequence ID" value="AAS51573"/>
    <property type="gene ID" value="AGOS_ADL346W"/>
</dbReference>
<dbReference type="GeneID" id="4619884"/>
<dbReference type="KEGG" id="ago:AGOS_ADL346W"/>
<dbReference type="eggNOG" id="KOG1178">
    <property type="taxonomic scope" value="Eukaryota"/>
</dbReference>
<dbReference type="HOGENOM" id="CLU_000022_19_1_1"/>
<dbReference type="InParanoid" id="Q75BB3"/>
<dbReference type="OMA" id="ENDKFTM"/>
<dbReference type="OrthoDB" id="329835at2759"/>
<dbReference type="UniPathway" id="UPA00033">
    <property type="reaction ID" value="UER00032"/>
</dbReference>
<dbReference type="Proteomes" id="UP000000591">
    <property type="component" value="Chromosome IV"/>
</dbReference>
<dbReference type="GO" id="GO:0004043">
    <property type="term" value="F:L-aminoadipate-semialdehyde dehydrogenase activity"/>
    <property type="evidence" value="ECO:0007669"/>
    <property type="project" value="UniProtKB-EC"/>
</dbReference>
<dbReference type="GO" id="GO:0031177">
    <property type="term" value="F:phosphopantetheine binding"/>
    <property type="evidence" value="ECO:0007669"/>
    <property type="project" value="InterPro"/>
</dbReference>
<dbReference type="GO" id="GO:0019878">
    <property type="term" value="P:lysine biosynthetic process via aminoadipic acid"/>
    <property type="evidence" value="ECO:0007669"/>
    <property type="project" value="UniProtKB-UniPathway"/>
</dbReference>
<dbReference type="CDD" id="cd17647">
    <property type="entry name" value="A_NRPS_alphaAR"/>
    <property type="match status" value="1"/>
</dbReference>
<dbReference type="CDD" id="cd05235">
    <property type="entry name" value="SDR_e1"/>
    <property type="match status" value="1"/>
</dbReference>
<dbReference type="FunFam" id="3.40.50.720:FF:000787">
    <property type="entry name" value="L-2-aminoadipate reductase"/>
    <property type="match status" value="1"/>
</dbReference>
<dbReference type="Gene3D" id="3.30.300.30">
    <property type="match status" value="1"/>
</dbReference>
<dbReference type="Gene3D" id="1.10.1200.10">
    <property type="entry name" value="ACP-like"/>
    <property type="match status" value="1"/>
</dbReference>
<dbReference type="Gene3D" id="3.40.50.12780">
    <property type="entry name" value="N-terminal domain of ligase-like"/>
    <property type="match status" value="1"/>
</dbReference>
<dbReference type="Gene3D" id="3.40.50.720">
    <property type="entry name" value="NAD(P)-binding Rossmann-like Domain"/>
    <property type="match status" value="1"/>
</dbReference>
<dbReference type="InterPro" id="IPR010071">
    <property type="entry name" value="AA_adenyl_dom"/>
</dbReference>
<dbReference type="InterPro" id="IPR036736">
    <property type="entry name" value="ACP-like_sf"/>
</dbReference>
<dbReference type="InterPro" id="IPR045851">
    <property type="entry name" value="AMP-bd_C_sf"/>
</dbReference>
<dbReference type="InterPro" id="IPR020845">
    <property type="entry name" value="AMP-binding_CS"/>
</dbReference>
<dbReference type="InterPro" id="IPR000873">
    <property type="entry name" value="AMP-dep_synth/lig_dom"/>
</dbReference>
<dbReference type="InterPro" id="IPR042099">
    <property type="entry name" value="ANL_N_sf"/>
</dbReference>
<dbReference type="InterPro" id="IPR013120">
    <property type="entry name" value="Far_NAD-bd"/>
</dbReference>
<dbReference type="InterPro" id="IPR014397">
    <property type="entry name" value="Lys2"/>
</dbReference>
<dbReference type="InterPro" id="IPR036291">
    <property type="entry name" value="NAD(P)-bd_dom_sf"/>
</dbReference>
<dbReference type="InterPro" id="IPR020806">
    <property type="entry name" value="PKS_PP-bd"/>
</dbReference>
<dbReference type="InterPro" id="IPR009081">
    <property type="entry name" value="PP-bd_ACP"/>
</dbReference>
<dbReference type="InterPro" id="IPR010080">
    <property type="entry name" value="Thioester_reductase-like_dom"/>
</dbReference>
<dbReference type="NCBIfam" id="TIGR01733">
    <property type="entry name" value="AA-adenyl-dom"/>
    <property type="match status" value="1"/>
</dbReference>
<dbReference type="NCBIfam" id="TIGR03443">
    <property type="entry name" value="alpha_am_amid"/>
    <property type="match status" value="1"/>
</dbReference>
<dbReference type="NCBIfam" id="TIGR01746">
    <property type="entry name" value="Thioester-redct"/>
    <property type="match status" value="1"/>
</dbReference>
<dbReference type="PANTHER" id="PTHR44845">
    <property type="entry name" value="CARRIER DOMAIN-CONTAINING PROTEIN"/>
    <property type="match status" value="1"/>
</dbReference>
<dbReference type="PANTHER" id="PTHR44845:SF1">
    <property type="entry name" value="L-2-AMINOADIPATE REDUCTASE"/>
    <property type="match status" value="1"/>
</dbReference>
<dbReference type="Pfam" id="PF00501">
    <property type="entry name" value="AMP-binding"/>
    <property type="match status" value="1"/>
</dbReference>
<dbReference type="Pfam" id="PF07993">
    <property type="entry name" value="NAD_binding_4"/>
    <property type="match status" value="1"/>
</dbReference>
<dbReference type="Pfam" id="PF00550">
    <property type="entry name" value="PP-binding"/>
    <property type="match status" value="1"/>
</dbReference>
<dbReference type="PIRSF" id="PIRSF001617">
    <property type="entry name" value="Alpha-AR"/>
    <property type="match status" value="1"/>
</dbReference>
<dbReference type="SMART" id="SM00823">
    <property type="entry name" value="PKS_PP"/>
    <property type="match status" value="1"/>
</dbReference>
<dbReference type="SUPFAM" id="SSF56801">
    <property type="entry name" value="Acetyl-CoA synthetase-like"/>
    <property type="match status" value="1"/>
</dbReference>
<dbReference type="SUPFAM" id="SSF47336">
    <property type="entry name" value="ACP-like"/>
    <property type="match status" value="1"/>
</dbReference>
<dbReference type="SUPFAM" id="SSF51735">
    <property type="entry name" value="NAD(P)-binding Rossmann-fold domains"/>
    <property type="match status" value="1"/>
</dbReference>
<dbReference type="PROSITE" id="PS00455">
    <property type="entry name" value="AMP_BINDING"/>
    <property type="match status" value="1"/>
</dbReference>
<dbReference type="PROSITE" id="PS50075">
    <property type="entry name" value="CARRIER"/>
    <property type="match status" value="1"/>
</dbReference>
<comment type="function">
    <text evidence="2">Catalyzes the activation of alpha-aminoadipate by ATP-dependent adenylation and the reduction of activated alpha-aminoadipate by NADPH. The activated alpha-aminoadipate is bound to the phosphopantheinyl group of the enzyme itself before it is reduced to (S)-2-amino-6-oxohexanoate.</text>
</comment>
<comment type="catalytic activity">
    <reaction evidence="2">
        <text>(S)-2-amino-6-oxohexanoate + NADP(+) + H2O = L-2-aminoadipate + NADPH + 2 H(+)</text>
        <dbReference type="Rhea" id="RHEA:12304"/>
        <dbReference type="ChEBI" id="CHEBI:15377"/>
        <dbReference type="ChEBI" id="CHEBI:15378"/>
        <dbReference type="ChEBI" id="CHEBI:57783"/>
        <dbReference type="ChEBI" id="CHEBI:58321"/>
        <dbReference type="ChEBI" id="CHEBI:58349"/>
        <dbReference type="ChEBI" id="CHEBI:58672"/>
        <dbReference type="EC" id="1.2.1.31"/>
    </reaction>
</comment>
<comment type="catalytic activity">
    <reaction evidence="2">
        <text>(S)-2-amino-6-oxohexanoate + NAD(+) + H2O = L-2-aminoadipate + NADH + 2 H(+)</text>
        <dbReference type="Rhea" id="RHEA:12308"/>
        <dbReference type="ChEBI" id="CHEBI:15377"/>
        <dbReference type="ChEBI" id="CHEBI:15378"/>
        <dbReference type="ChEBI" id="CHEBI:57540"/>
        <dbReference type="ChEBI" id="CHEBI:57945"/>
        <dbReference type="ChEBI" id="CHEBI:58321"/>
        <dbReference type="ChEBI" id="CHEBI:58672"/>
        <dbReference type="EC" id="1.2.1.31"/>
    </reaction>
</comment>
<comment type="catalytic activity">
    <reaction evidence="2">
        <text>(S)-2-amino-6-oxohexanoate + AMP + diphosphate + NADP(+) = L-2-aminoadipate + ATP + NADPH + H(+)</text>
        <dbReference type="Rhea" id="RHEA:46936"/>
        <dbReference type="ChEBI" id="CHEBI:15378"/>
        <dbReference type="ChEBI" id="CHEBI:30616"/>
        <dbReference type="ChEBI" id="CHEBI:33019"/>
        <dbReference type="ChEBI" id="CHEBI:57783"/>
        <dbReference type="ChEBI" id="CHEBI:58321"/>
        <dbReference type="ChEBI" id="CHEBI:58349"/>
        <dbReference type="ChEBI" id="CHEBI:58672"/>
        <dbReference type="ChEBI" id="CHEBI:456215"/>
        <dbReference type="EC" id="1.2.1.95"/>
    </reaction>
</comment>
<comment type="cofactor">
    <cofactor evidence="2">
        <name>pantetheine 4'-phosphate</name>
        <dbReference type="ChEBI" id="CHEBI:47942"/>
    </cofactor>
    <text evidence="2">Binds 1 phosphopantetheine covalently.</text>
</comment>
<comment type="pathway">
    <text>Amino-acid biosynthesis; L-lysine biosynthesis via AAA pathway; L-lysine from L-alpha-aminoadipate (fungal route): step 1/3.</text>
</comment>
<comment type="subunit">
    <text evidence="1">Heterodimer of an alpha and a beta subunit.</text>
</comment>
<comment type="similarity">
    <text evidence="4">Belongs to the ATP-dependent AMP-binding enzyme family.</text>
</comment>
<evidence type="ECO:0000250" key="1"/>
<evidence type="ECO:0000250" key="2">
    <source>
        <dbReference type="UniProtKB" id="P07702"/>
    </source>
</evidence>
<evidence type="ECO:0000255" key="3">
    <source>
        <dbReference type="PROSITE-ProRule" id="PRU00258"/>
    </source>
</evidence>
<evidence type="ECO:0000305" key="4"/>
<gene>
    <name type="primary">LYS2</name>
    <name type="ordered locus">ADL346W</name>
</gene>
<keyword id="KW-0028">Amino-acid biosynthesis</keyword>
<keyword id="KW-0457">Lysine biosynthesis</keyword>
<keyword id="KW-0521">NADP</keyword>
<keyword id="KW-0560">Oxidoreductase</keyword>
<keyword id="KW-0596">Phosphopantetheine</keyword>
<keyword id="KW-0597">Phosphoprotein</keyword>
<keyword id="KW-1185">Reference proteome</keyword>
<sequence length="1385" mass="151953">MCAVLEPSMIRWLSEVDNIVVSSLPSDYIPSGPAGVKAESCEVELPGSFGVIDEEDSYIRLLSAFATLVCRMSGESDVAMYSKANRLLKLAVPPGVAFQQLRASVTEAVEGTLALPAVDFDELSALEREKKQLDYYPQYFKVGVVTAADKTKLDQFRYHKFELLLRQVTSSRFEMVYDSERFSPDRIGELGEQLVQFLTLVEAKDDADVYAISLVTSGASRVLPDPTTDLGWGQFRGAIHDIFQHHAETRPDRLCVVETGVGQVAARTFTYSAINCASNIVAHYLLARGIRRGDVVMIYSTRGVDLLVSVLGVLKSGAVFSVIDPAYPPARQNVYLGVAKPAGLIVIQAAGQLDEAVEAFIRDNLSLKARLPALALQTDGAILGGTLPDFHLDTLVPFASLKNTRTDVVVGPDSNPTLSFTSGSEGIPKGVLGRHFSLTYYFDWMAKRFGLSEDDKFTMLSGIAHDPIQRDMFTPIYLGAQLLVPQEDDIGTPGRLATWMATHGATVTHLTPAMGQVLTADATTPFPSLKRAFFVGDVLTKRDCARLQSLAENVAIVNMYGSTETQRAVSYFEVPSCSSNPSYLDNLKSIIPAGRGMHNVQLLIVNRHDRTKLCGIGEVGEIYVRAGGLSEGYRGLPEINKEKFIDNWFVDAGHWGGLDLSGDEPWRNYWLGVRDRLYRTGDLGRYLPNGDCECCGRADDQVKIRGFRIELGEIDTNISQYPLCRENITLLRKDQNGESTLISYLVPRSDQKALASFISAVPESIATESIAGSLIKYHKLINDIRGFLKKRLAGYAIPTLIMVMERLPLNPNGKIDKNKLQFPEPTELDRASEHFASETLGLSSFSPLEQEIRKIWLDLLPTRPAITSSDESFFDLGGTSILATRMAIVLRNRLNISLALSTIFRYPTVKELAKEISRVRGTISDDKSSNSGTTEYYADAKHVSEAELASKYESRLSLLPSGATSAPVYVFLTGVTGFLGCHILADLLNRSRKPYDITVYAHVRASDESSALQRIKSVCTAYGLWKNAYAPRIKVVLGNLAEKQFGLPKKAWHDLQEGIDVIIHNAALVHWVYPYSKLREANVLSTVNVLNLAAAGKAKYFTFVSSTSALDTKHYLELSNAAIESGGSGVPEDDDLMGGSLGLKGGYGQSKWAAEFIIKRAGERGLRGCILRPGYVTGSPSTGASNADDFLLRFLRGCVQLGKIPDIEGTVNMVPVDYVARLATAASFSSSGNTHMMVVNVNAKPRISFRDYLLALKEYGYQVTSVPYDEWSKALESSSDEENPLYPLLYLVLDDLPKKLRSPELDTTNAKFVLEEDFARTNIEPIIITSVSLEVVGSYISFLHKLGFLEEPAKGSRPLPNISLSDEQISLIAAVATARSSTAKP</sequence>
<reference key="1">
    <citation type="journal article" date="2004" name="Science">
        <title>The Ashbya gossypii genome as a tool for mapping the ancient Saccharomyces cerevisiae genome.</title>
        <authorList>
            <person name="Dietrich F.S."/>
            <person name="Voegeli S."/>
            <person name="Brachat S."/>
            <person name="Lerch A."/>
            <person name="Gates K."/>
            <person name="Steiner S."/>
            <person name="Mohr C."/>
            <person name="Poehlmann R."/>
            <person name="Luedi P."/>
            <person name="Choi S."/>
            <person name="Wing R.A."/>
            <person name="Flavier A."/>
            <person name="Gaffney T.D."/>
            <person name="Philippsen P."/>
        </authorList>
    </citation>
    <scope>NUCLEOTIDE SEQUENCE [LARGE SCALE GENOMIC DNA]</scope>
    <source>
        <strain>ATCC 10895 / CBS 109.51 / FGSC 9923 / NRRL Y-1056</strain>
    </source>
</reference>
<reference key="2">
    <citation type="journal article" date="2013" name="G3 (Bethesda)">
        <title>Genomes of Ashbya fungi isolated from insects reveal four mating-type loci, numerous translocations, lack of transposons, and distinct gene duplications.</title>
        <authorList>
            <person name="Dietrich F.S."/>
            <person name="Voegeli S."/>
            <person name="Kuo S."/>
            <person name="Philippsen P."/>
        </authorList>
    </citation>
    <scope>GENOME REANNOTATION</scope>
    <scope>SEQUENCE REVISION TO 543-570; 575; 578; 587 AND 591</scope>
    <source>
        <strain>ATCC 10895 / CBS 109.51 / FGSC 9923 / NRRL Y-1056</strain>
    </source>
</reference>
<name>LYS2_EREGS</name>
<accession>Q75BB3</accession>